<keyword id="KW-0997">Cell inner membrane</keyword>
<keyword id="KW-1003">Cell membrane</keyword>
<keyword id="KW-0249">Electron transport</keyword>
<keyword id="KW-0285">Flavoprotein</keyword>
<keyword id="KW-0288">FMN</keyword>
<keyword id="KW-0472">Membrane</keyword>
<keyword id="KW-0597">Phosphoprotein</keyword>
<keyword id="KW-1185">Reference proteome</keyword>
<keyword id="KW-1278">Translocase</keyword>
<keyword id="KW-0812">Transmembrane</keyword>
<keyword id="KW-1133">Transmembrane helix</keyword>
<keyword id="KW-0813">Transport</keyword>
<feature type="chain" id="PRO_0000074450" description="Ion-translocating oxidoreductase complex subunit D">
    <location>
        <begin position="1"/>
        <end position="347"/>
    </location>
</feature>
<feature type="transmembrane region" description="Helical" evidence="1">
    <location>
        <begin position="15"/>
        <end position="35"/>
    </location>
</feature>
<feature type="transmembrane region" description="Helical" evidence="1">
    <location>
        <begin position="36"/>
        <end position="56"/>
    </location>
</feature>
<feature type="transmembrane region" description="Helical" evidence="1">
    <location>
        <begin position="84"/>
        <end position="104"/>
    </location>
</feature>
<feature type="transmembrane region" description="Helical" evidence="1">
    <location>
        <begin position="114"/>
        <end position="134"/>
    </location>
</feature>
<feature type="transmembrane region" description="Helical" evidence="1">
    <location>
        <begin position="217"/>
        <end position="237"/>
    </location>
</feature>
<feature type="transmembrane region" description="Helical" evidence="1">
    <location>
        <begin position="239"/>
        <end position="259"/>
    </location>
</feature>
<feature type="transmembrane region" description="Helical" evidence="1">
    <location>
        <begin position="261"/>
        <end position="281"/>
    </location>
</feature>
<feature type="transmembrane region" description="Helical" evidence="1">
    <location>
        <begin position="289"/>
        <end position="309"/>
    </location>
</feature>
<feature type="transmembrane region" description="Helical" evidence="1">
    <location>
        <begin position="315"/>
        <end position="335"/>
    </location>
</feature>
<feature type="modified residue" description="FMN phosphoryl threonine" evidence="1">
    <location>
        <position position="182"/>
    </location>
</feature>
<accession>P57216</accession>
<sequence>MNFPCIYHVYSIRKIMFLVIVACLPGIFAKYYFFGIGTLIQIFFSIFISLVLEIIILKIRSKNIKNYLQDTSLVLTSVLFGVSIPPLLPWWMTSIGLFFAIVVAKHLYGGIGQNIFNPAMVGYAVLLISFPVYMNNWNERDFSLSFFNDFKKSAYIIFFKNDITTVSSSYLNIIPDAFTTATPLNNFKIKSHLKDDFFLKENIIKNKEVSIQTSWKCINISFFLGGIFLLFTKIICWRIPISFLSSLGMLSIITYFYSKELFMSPQVHFFSGGTMICAFFIATDPVTAACNNVGKIVFGIIIGFLVWIIRNYSDYPDAIAFSVLFANMTVPLVDYYTKSSGYGRNNI</sequence>
<dbReference type="EC" id="7.-.-.-" evidence="1"/>
<dbReference type="EMBL" id="BA000003">
    <property type="protein sequence ID" value="BAB12834.1"/>
    <property type="status" value="ALT_INIT"/>
    <property type="molecule type" value="Genomic_DNA"/>
</dbReference>
<dbReference type="RefSeq" id="NP_239948.2">
    <property type="nucleotide sequence ID" value="NC_002528.1"/>
</dbReference>
<dbReference type="RefSeq" id="WP_010895954.1">
    <property type="nucleotide sequence ID" value="NC_002528.1"/>
</dbReference>
<dbReference type="SMR" id="P57216"/>
<dbReference type="STRING" id="563178.BUAP5A_114"/>
<dbReference type="EnsemblBacteria" id="BAB12834">
    <property type="protein sequence ID" value="BAB12834"/>
    <property type="gene ID" value="BAB12834"/>
</dbReference>
<dbReference type="KEGG" id="buc:BU116"/>
<dbReference type="PATRIC" id="fig|107806.10.peg.124"/>
<dbReference type="eggNOG" id="COG4658">
    <property type="taxonomic scope" value="Bacteria"/>
</dbReference>
<dbReference type="HOGENOM" id="CLU_042020_0_0_6"/>
<dbReference type="BioCyc" id="BAPH107806:GBZJ-115-MONOMER"/>
<dbReference type="Proteomes" id="UP000001806">
    <property type="component" value="Chromosome"/>
</dbReference>
<dbReference type="GO" id="GO:0005886">
    <property type="term" value="C:plasma membrane"/>
    <property type="evidence" value="ECO:0007669"/>
    <property type="project" value="UniProtKB-SubCell"/>
</dbReference>
<dbReference type="GO" id="GO:0022900">
    <property type="term" value="P:electron transport chain"/>
    <property type="evidence" value="ECO:0007669"/>
    <property type="project" value="UniProtKB-UniRule"/>
</dbReference>
<dbReference type="GO" id="GO:0055085">
    <property type="term" value="P:transmembrane transport"/>
    <property type="evidence" value="ECO:0007669"/>
    <property type="project" value="InterPro"/>
</dbReference>
<dbReference type="HAMAP" id="MF_00462">
    <property type="entry name" value="RsxD_RnfD"/>
    <property type="match status" value="1"/>
</dbReference>
<dbReference type="InterPro" id="IPR004338">
    <property type="entry name" value="NqrB/RnfD"/>
</dbReference>
<dbReference type="InterPro" id="IPR011303">
    <property type="entry name" value="RnfD_bac"/>
</dbReference>
<dbReference type="NCBIfam" id="TIGR01946">
    <property type="entry name" value="rnfD"/>
    <property type="match status" value="1"/>
</dbReference>
<dbReference type="PANTHER" id="PTHR30578">
    <property type="entry name" value="ELECTRON TRANSPORT COMPLEX PROTEIN RNFD"/>
    <property type="match status" value="1"/>
</dbReference>
<dbReference type="PANTHER" id="PTHR30578:SF0">
    <property type="entry name" value="ION-TRANSLOCATING OXIDOREDUCTASE COMPLEX SUBUNIT D"/>
    <property type="match status" value="1"/>
</dbReference>
<dbReference type="Pfam" id="PF03116">
    <property type="entry name" value="NQR2_RnfD_RnfE"/>
    <property type="match status" value="1"/>
</dbReference>
<protein>
    <recommendedName>
        <fullName evidence="1">Ion-translocating oxidoreductase complex subunit D</fullName>
        <ecNumber evidence="1">7.-.-.-</ecNumber>
    </recommendedName>
    <alternativeName>
        <fullName evidence="1">Rnf electron transport complex subunit D</fullName>
    </alternativeName>
</protein>
<evidence type="ECO:0000255" key="1">
    <source>
        <dbReference type="HAMAP-Rule" id="MF_00462"/>
    </source>
</evidence>
<evidence type="ECO:0000305" key="2"/>
<reference key="1">
    <citation type="journal article" date="2000" name="Nature">
        <title>Genome sequence of the endocellular bacterial symbiont of aphids Buchnera sp. APS.</title>
        <authorList>
            <person name="Shigenobu S."/>
            <person name="Watanabe H."/>
            <person name="Hattori M."/>
            <person name="Sakaki Y."/>
            <person name="Ishikawa H."/>
        </authorList>
    </citation>
    <scope>NUCLEOTIDE SEQUENCE [LARGE SCALE GENOMIC DNA]</scope>
    <source>
        <strain>APS</strain>
    </source>
</reference>
<proteinExistence type="inferred from homology"/>
<comment type="function">
    <text evidence="1">Part of a membrane-bound complex that couples electron transfer with translocation of ions across the membrane.</text>
</comment>
<comment type="cofactor">
    <cofactor evidence="1">
        <name>FMN</name>
        <dbReference type="ChEBI" id="CHEBI:58210"/>
    </cofactor>
</comment>
<comment type="subunit">
    <text evidence="1">The complex is composed of six subunits: RnfA, RnfB, RnfC, RnfD, RnfE and RnfG.</text>
</comment>
<comment type="subcellular location">
    <subcellularLocation>
        <location evidence="1">Cell inner membrane</location>
        <topology evidence="1">Multi-pass membrane protein</topology>
    </subcellularLocation>
</comment>
<comment type="similarity">
    <text evidence="1">Belongs to the NqrB/RnfD family.</text>
</comment>
<comment type="sequence caution" evidence="2">
    <conflict type="erroneous initiation">
        <sequence resource="EMBL-CDS" id="BAB12834"/>
    </conflict>
</comment>
<name>RNFD_BUCAI</name>
<gene>
    <name evidence="1" type="primary">rnfD</name>
    <name type="ordered locus">BU116</name>
</gene>
<organism>
    <name type="scientific">Buchnera aphidicola subsp. Acyrthosiphon pisum (strain APS)</name>
    <name type="common">Acyrthosiphon pisum symbiotic bacterium</name>
    <dbReference type="NCBI Taxonomy" id="107806"/>
    <lineage>
        <taxon>Bacteria</taxon>
        <taxon>Pseudomonadati</taxon>
        <taxon>Pseudomonadota</taxon>
        <taxon>Gammaproteobacteria</taxon>
        <taxon>Enterobacterales</taxon>
        <taxon>Erwiniaceae</taxon>
        <taxon>Buchnera</taxon>
    </lineage>
</organism>